<comment type="function">
    <text evidence="1">NDH-1 shuttles electrons from NADH, via FMN and iron-sulfur (Fe-S) centers, to quinones in the respiratory chain. The immediate electron acceptor for the enzyme in this species is believed to be a menaquinone. Couples the redox reaction to proton translocation (for every two electrons transferred, four hydrogen ions are translocated across the cytoplasmic membrane), and thus conserves the redox energy in a proton gradient.</text>
</comment>
<comment type="catalytic activity">
    <reaction evidence="1">
        <text>a quinone + NADH + 5 H(+)(in) = a quinol + NAD(+) + 4 H(+)(out)</text>
        <dbReference type="Rhea" id="RHEA:57888"/>
        <dbReference type="ChEBI" id="CHEBI:15378"/>
        <dbReference type="ChEBI" id="CHEBI:24646"/>
        <dbReference type="ChEBI" id="CHEBI:57540"/>
        <dbReference type="ChEBI" id="CHEBI:57945"/>
        <dbReference type="ChEBI" id="CHEBI:132124"/>
    </reaction>
</comment>
<comment type="subunit">
    <text evidence="1">NDH-1 is composed of 14 different subunits. Subunits NuoA, H, J, K, L, M, N constitute the membrane sector of the complex.</text>
</comment>
<comment type="subcellular location">
    <subcellularLocation>
        <location evidence="1">Cell membrane</location>
        <topology evidence="1">Multi-pass membrane protein</topology>
    </subcellularLocation>
</comment>
<comment type="similarity">
    <text evidence="1">Belongs to the complex I subunit 4L family.</text>
</comment>
<name>NUOK_BACHK</name>
<reference key="1">
    <citation type="journal article" date="2006" name="J. Bacteriol.">
        <title>Pathogenomic sequence analysis of Bacillus cereus and Bacillus thuringiensis isolates closely related to Bacillus anthracis.</title>
        <authorList>
            <person name="Han C.S."/>
            <person name="Xie G."/>
            <person name="Challacombe J.F."/>
            <person name="Altherr M.R."/>
            <person name="Bhotika S.S."/>
            <person name="Bruce D."/>
            <person name="Campbell C.S."/>
            <person name="Campbell M.L."/>
            <person name="Chen J."/>
            <person name="Chertkov O."/>
            <person name="Cleland C."/>
            <person name="Dimitrijevic M."/>
            <person name="Doggett N.A."/>
            <person name="Fawcett J.J."/>
            <person name="Glavina T."/>
            <person name="Goodwin L.A."/>
            <person name="Hill K.K."/>
            <person name="Hitchcock P."/>
            <person name="Jackson P.J."/>
            <person name="Keim P."/>
            <person name="Kewalramani A.R."/>
            <person name="Longmire J."/>
            <person name="Lucas S."/>
            <person name="Malfatti S."/>
            <person name="McMurry K."/>
            <person name="Meincke L.J."/>
            <person name="Misra M."/>
            <person name="Moseman B.L."/>
            <person name="Mundt M."/>
            <person name="Munk A.C."/>
            <person name="Okinaka R.T."/>
            <person name="Parson-Quintana B."/>
            <person name="Reilly L.P."/>
            <person name="Richardson P."/>
            <person name="Robinson D.L."/>
            <person name="Rubin E."/>
            <person name="Saunders E."/>
            <person name="Tapia R."/>
            <person name="Tesmer J.G."/>
            <person name="Thayer N."/>
            <person name="Thompson L.S."/>
            <person name="Tice H."/>
            <person name="Ticknor L.O."/>
            <person name="Wills P.L."/>
            <person name="Brettin T.S."/>
            <person name="Gilna P."/>
        </authorList>
    </citation>
    <scope>NUCLEOTIDE SEQUENCE [LARGE SCALE GENOMIC DNA]</scope>
    <source>
        <strain>97-27</strain>
    </source>
</reference>
<keyword id="KW-1003">Cell membrane</keyword>
<keyword id="KW-0472">Membrane</keyword>
<keyword id="KW-0520">NAD</keyword>
<keyword id="KW-0874">Quinone</keyword>
<keyword id="KW-1278">Translocase</keyword>
<keyword id="KW-0812">Transmembrane</keyword>
<keyword id="KW-1133">Transmembrane helix</keyword>
<keyword id="KW-0813">Transport</keyword>
<feature type="chain" id="PRO_0000389949" description="NADH-quinone oxidoreductase subunit K">
    <location>
        <begin position="1"/>
        <end position="104"/>
    </location>
</feature>
<feature type="transmembrane region" description="Helical" evidence="1">
    <location>
        <begin position="4"/>
        <end position="24"/>
    </location>
</feature>
<feature type="transmembrane region" description="Helical" evidence="1">
    <location>
        <begin position="31"/>
        <end position="51"/>
    </location>
</feature>
<feature type="transmembrane region" description="Helical" evidence="1">
    <location>
        <begin position="67"/>
        <end position="87"/>
    </location>
</feature>
<dbReference type="EC" id="7.1.1.-" evidence="1"/>
<dbReference type="EMBL" id="AE017355">
    <property type="protein sequence ID" value="AAT63984.1"/>
    <property type="molecule type" value="Genomic_DNA"/>
</dbReference>
<dbReference type="RefSeq" id="WP_000100078.1">
    <property type="nucleotide sequence ID" value="NC_005957.1"/>
</dbReference>
<dbReference type="RefSeq" id="YP_039284.1">
    <property type="nucleotide sequence ID" value="NC_005957.1"/>
</dbReference>
<dbReference type="SMR" id="Q6HAZ2"/>
<dbReference type="GeneID" id="92803549"/>
<dbReference type="KEGG" id="btk:BT9727_4975"/>
<dbReference type="PATRIC" id="fig|281309.8.peg.5292"/>
<dbReference type="HOGENOM" id="CLU_144724_0_0_9"/>
<dbReference type="Proteomes" id="UP000001301">
    <property type="component" value="Chromosome"/>
</dbReference>
<dbReference type="GO" id="GO:0030964">
    <property type="term" value="C:NADH dehydrogenase complex"/>
    <property type="evidence" value="ECO:0007669"/>
    <property type="project" value="TreeGrafter"/>
</dbReference>
<dbReference type="GO" id="GO:0005886">
    <property type="term" value="C:plasma membrane"/>
    <property type="evidence" value="ECO:0007669"/>
    <property type="project" value="UniProtKB-SubCell"/>
</dbReference>
<dbReference type="GO" id="GO:0050136">
    <property type="term" value="F:NADH:ubiquinone reductase (non-electrogenic) activity"/>
    <property type="evidence" value="ECO:0007669"/>
    <property type="project" value="UniProtKB-UniRule"/>
</dbReference>
<dbReference type="GO" id="GO:0048038">
    <property type="term" value="F:quinone binding"/>
    <property type="evidence" value="ECO:0007669"/>
    <property type="project" value="UniProtKB-KW"/>
</dbReference>
<dbReference type="GO" id="GO:0042773">
    <property type="term" value="P:ATP synthesis coupled electron transport"/>
    <property type="evidence" value="ECO:0007669"/>
    <property type="project" value="InterPro"/>
</dbReference>
<dbReference type="FunFam" id="1.10.287.3510:FF:000001">
    <property type="entry name" value="NADH-quinone oxidoreductase subunit K"/>
    <property type="match status" value="1"/>
</dbReference>
<dbReference type="Gene3D" id="1.10.287.3510">
    <property type="match status" value="1"/>
</dbReference>
<dbReference type="HAMAP" id="MF_01456">
    <property type="entry name" value="NDH1_NuoK"/>
    <property type="match status" value="1"/>
</dbReference>
<dbReference type="InterPro" id="IPR001133">
    <property type="entry name" value="NADH_UbQ_OxRdtase_chain4L/K"/>
</dbReference>
<dbReference type="InterPro" id="IPR039428">
    <property type="entry name" value="NUOK/Mnh_C1-like"/>
</dbReference>
<dbReference type="NCBIfam" id="NF004320">
    <property type="entry name" value="PRK05715.1-2"/>
    <property type="match status" value="1"/>
</dbReference>
<dbReference type="NCBIfam" id="NF004321">
    <property type="entry name" value="PRK05715.1-3"/>
    <property type="match status" value="1"/>
</dbReference>
<dbReference type="NCBIfam" id="NF004322">
    <property type="entry name" value="PRK05715.1-4"/>
    <property type="match status" value="1"/>
</dbReference>
<dbReference type="NCBIfam" id="NF004323">
    <property type="entry name" value="PRK05715.1-5"/>
    <property type="match status" value="1"/>
</dbReference>
<dbReference type="PANTHER" id="PTHR11434:SF16">
    <property type="entry name" value="NADH-UBIQUINONE OXIDOREDUCTASE CHAIN 4L"/>
    <property type="match status" value="1"/>
</dbReference>
<dbReference type="PANTHER" id="PTHR11434">
    <property type="entry name" value="NADH-UBIQUINONE OXIDOREDUCTASE SUBUNIT ND4L"/>
    <property type="match status" value="1"/>
</dbReference>
<dbReference type="Pfam" id="PF00420">
    <property type="entry name" value="Oxidored_q2"/>
    <property type="match status" value="1"/>
</dbReference>
<proteinExistence type="inferred from homology"/>
<evidence type="ECO:0000255" key="1">
    <source>
        <dbReference type="HAMAP-Rule" id="MF_01456"/>
    </source>
</evidence>
<sequence length="104" mass="11060">MSSVPASAYLTLAIILFCIGLFGALTKRNTVIVLVCIELMLNAANLNLVAFSKLGLFPNLTGQIFSLFTMAVAAAEAAVGLAILIALYRNRTTVHVDEMDTLKG</sequence>
<protein>
    <recommendedName>
        <fullName evidence="1">NADH-quinone oxidoreductase subunit K</fullName>
        <ecNumber evidence="1">7.1.1.-</ecNumber>
    </recommendedName>
    <alternativeName>
        <fullName evidence="1">NADH dehydrogenase I subunit K</fullName>
    </alternativeName>
    <alternativeName>
        <fullName evidence="1">NDH-1 subunit K</fullName>
    </alternativeName>
</protein>
<accession>Q6HAZ2</accession>
<organism>
    <name type="scientific">Bacillus thuringiensis subsp. konkukian (strain 97-27)</name>
    <dbReference type="NCBI Taxonomy" id="281309"/>
    <lineage>
        <taxon>Bacteria</taxon>
        <taxon>Bacillati</taxon>
        <taxon>Bacillota</taxon>
        <taxon>Bacilli</taxon>
        <taxon>Bacillales</taxon>
        <taxon>Bacillaceae</taxon>
        <taxon>Bacillus</taxon>
        <taxon>Bacillus cereus group</taxon>
    </lineage>
</organism>
<gene>
    <name evidence="1" type="primary">nuoK</name>
    <name type="ordered locus">BT9727_4975</name>
</gene>